<name>ARLY_ACET2</name>
<keyword id="KW-0028">Amino-acid biosynthesis</keyword>
<keyword id="KW-0055">Arginine biosynthesis</keyword>
<keyword id="KW-0963">Cytoplasm</keyword>
<keyword id="KW-0456">Lyase</keyword>
<keyword id="KW-1185">Reference proteome</keyword>
<gene>
    <name evidence="1" type="primary">argH</name>
    <name type="ordered locus">Cthe_0178</name>
</gene>
<dbReference type="EC" id="4.3.2.1" evidence="1"/>
<dbReference type="EMBL" id="CP000568">
    <property type="protein sequence ID" value="ABN51419.1"/>
    <property type="molecule type" value="Genomic_DNA"/>
</dbReference>
<dbReference type="RefSeq" id="WP_003512248.1">
    <property type="nucleotide sequence ID" value="NC_009012.1"/>
</dbReference>
<dbReference type="SMR" id="A3DBU0"/>
<dbReference type="STRING" id="203119.Cthe_0178"/>
<dbReference type="GeneID" id="35805126"/>
<dbReference type="KEGG" id="cth:Cthe_0178"/>
<dbReference type="eggNOG" id="COG0165">
    <property type="taxonomic scope" value="Bacteria"/>
</dbReference>
<dbReference type="HOGENOM" id="CLU_027272_2_3_9"/>
<dbReference type="OrthoDB" id="9769623at2"/>
<dbReference type="UniPathway" id="UPA00068">
    <property type="reaction ID" value="UER00114"/>
</dbReference>
<dbReference type="Proteomes" id="UP000002145">
    <property type="component" value="Chromosome"/>
</dbReference>
<dbReference type="GO" id="GO:0005829">
    <property type="term" value="C:cytosol"/>
    <property type="evidence" value="ECO:0007669"/>
    <property type="project" value="TreeGrafter"/>
</dbReference>
<dbReference type="GO" id="GO:0004056">
    <property type="term" value="F:argininosuccinate lyase activity"/>
    <property type="evidence" value="ECO:0007669"/>
    <property type="project" value="UniProtKB-UniRule"/>
</dbReference>
<dbReference type="GO" id="GO:0042450">
    <property type="term" value="P:arginine biosynthetic process via ornithine"/>
    <property type="evidence" value="ECO:0007669"/>
    <property type="project" value="InterPro"/>
</dbReference>
<dbReference type="GO" id="GO:0006526">
    <property type="term" value="P:L-arginine biosynthetic process"/>
    <property type="evidence" value="ECO:0007669"/>
    <property type="project" value="UniProtKB-UniRule"/>
</dbReference>
<dbReference type="CDD" id="cd01359">
    <property type="entry name" value="Argininosuccinate_lyase"/>
    <property type="match status" value="1"/>
</dbReference>
<dbReference type="FunFam" id="1.10.275.10:FF:000002">
    <property type="entry name" value="Argininosuccinate lyase"/>
    <property type="match status" value="1"/>
</dbReference>
<dbReference type="FunFam" id="1.10.40.30:FF:000001">
    <property type="entry name" value="Argininosuccinate lyase"/>
    <property type="match status" value="1"/>
</dbReference>
<dbReference type="FunFam" id="1.20.200.10:FF:000006">
    <property type="entry name" value="Argininosuccinate lyase"/>
    <property type="match status" value="1"/>
</dbReference>
<dbReference type="Gene3D" id="1.10.40.30">
    <property type="entry name" value="Fumarase/aspartase (C-terminal domain)"/>
    <property type="match status" value="1"/>
</dbReference>
<dbReference type="Gene3D" id="1.20.200.10">
    <property type="entry name" value="Fumarase/aspartase (Central domain)"/>
    <property type="match status" value="1"/>
</dbReference>
<dbReference type="Gene3D" id="1.10.275.10">
    <property type="entry name" value="Fumarase/aspartase (N-terminal domain)"/>
    <property type="match status" value="1"/>
</dbReference>
<dbReference type="HAMAP" id="MF_00006">
    <property type="entry name" value="Arg_succ_lyase"/>
    <property type="match status" value="1"/>
</dbReference>
<dbReference type="InterPro" id="IPR029419">
    <property type="entry name" value="Arg_succ_lyase_C"/>
</dbReference>
<dbReference type="InterPro" id="IPR009049">
    <property type="entry name" value="Argininosuccinate_lyase"/>
</dbReference>
<dbReference type="InterPro" id="IPR024083">
    <property type="entry name" value="Fumarase/histidase_N"/>
</dbReference>
<dbReference type="InterPro" id="IPR020557">
    <property type="entry name" value="Fumarate_lyase_CS"/>
</dbReference>
<dbReference type="InterPro" id="IPR000362">
    <property type="entry name" value="Fumarate_lyase_fam"/>
</dbReference>
<dbReference type="InterPro" id="IPR022761">
    <property type="entry name" value="Fumarate_lyase_N"/>
</dbReference>
<dbReference type="InterPro" id="IPR008948">
    <property type="entry name" value="L-Aspartase-like"/>
</dbReference>
<dbReference type="NCBIfam" id="TIGR00838">
    <property type="entry name" value="argH"/>
    <property type="match status" value="1"/>
</dbReference>
<dbReference type="PANTHER" id="PTHR43814">
    <property type="entry name" value="ARGININOSUCCINATE LYASE"/>
    <property type="match status" value="1"/>
</dbReference>
<dbReference type="PANTHER" id="PTHR43814:SF1">
    <property type="entry name" value="ARGININOSUCCINATE LYASE"/>
    <property type="match status" value="1"/>
</dbReference>
<dbReference type="Pfam" id="PF14698">
    <property type="entry name" value="ASL_C2"/>
    <property type="match status" value="1"/>
</dbReference>
<dbReference type="Pfam" id="PF00206">
    <property type="entry name" value="Lyase_1"/>
    <property type="match status" value="1"/>
</dbReference>
<dbReference type="PRINTS" id="PR00145">
    <property type="entry name" value="ARGSUCLYASE"/>
</dbReference>
<dbReference type="PRINTS" id="PR00149">
    <property type="entry name" value="FUMRATELYASE"/>
</dbReference>
<dbReference type="SUPFAM" id="SSF48557">
    <property type="entry name" value="L-aspartase-like"/>
    <property type="match status" value="1"/>
</dbReference>
<dbReference type="PROSITE" id="PS00163">
    <property type="entry name" value="FUMARATE_LYASES"/>
    <property type="match status" value="1"/>
</dbReference>
<evidence type="ECO:0000255" key="1">
    <source>
        <dbReference type="HAMAP-Rule" id="MF_00006"/>
    </source>
</evidence>
<proteinExistence type="inferred from homology"/>
<reference key="1">
    <citation type="submission" date="2007-02" db="EMBL/GenBank/DDBJ databases">
        <title>Complete sequence of Clostridium thermocellum ATCC 27405.</title>
        <authorList>
            <consortium name="US DOE Joint Genome Institute"/>
            <person name="Copeland A."/>
            <person name="Lucas S."/>
            <person name="Lapidus A."/>
            <person name="Barry K."/>
            <person name="Detter J.C."/>
            <person name="Glavina del Rio T."/>
            <person name="Hammon N."/>
            <person name="Israni S."/>
            <person name="Dalin E."/>
            <person name="Tice H."/>
            <person name="Pitluck S."/>
            <person name="Chertkov O."/>
            <person name="Brettin T."/>
            <person name="Bruce D."/>
            <person name="Han C."/>
            <person name="Tapia R."/>
            <person name="Gilna P."/>
            <person name="Schmutz J."/>
            <person name="Larimer F."/>
            <person name="Land M."/>
            <person name="Hauser L."/>
            <person name="Kyrpides N."/>
            <person name="Mikhailova N."/>
            <person name="Wu J.H.D."/>
            <person name="Newcomb M."/>
            <person name="Richardson P."/>
        </authorList>
    </citation>
    <scope>NUCLEOTIDE SEQUENCE [LARGE SCALE GENOMIC DNA]</scope>
    <source>
        <strain>ATCC 27405 / DSM 1237 / JCM 9322 / NBRC 103400 / NCIMB 10682 / NRRL B-4536 / VPI 7372</strain>
    </source>
</reference>
<accession>A3DBU0</accession>
<organism>
    <name type="scientific">Acetivibrio thermocellus (strain ATCC 27405 / DSM 1237 / JCM 9322 / NBRC 103400 / NCIMB 10682 / NRRL B-4536 / VPI 7372)</name>
    <name type="common">Clostridium thermocellum</name>
    <dbReference type="NCBI Taxonomy" id="203119"/>
    <lineage>
        <taxon>Bacteria</taxon>
        <taxon>Bacillati</taxon>
        <taxon>Bacillota</taxon>
        <taxon>Clostridia</taxon>
        <taxon>Eubacteriales</taxon>
        <taxon>Oscillospiraceae</taxon>
        <taxon>Acetivibrio</taxon>
    </lineage>
</organism>
<sequence>MKLWGGRFEKNTDKSVDDFNSSIRFDCRMYKQDILGSIAHAKMLGKCKIISEEDSILIQNTLREILKDIEEGKVQFEIDAEDIHMNVEKILISRIGDVGKKLHTGRSRNDQVALDIRMYLRDEVVEIRKLLVNLERTLIEIAKNNIDTILPGYTHLQRAQPITFAHHMMAYFQMFKRDIERLNDCYKRINVMPLGSGALASTTYPLDRYMVAKELGFDSITENSLDAVSDRDFVIELSACLSILMMHLSRFSEEIILWASHEFGFIELDDAYSTGSSIMPQKKNPDVAELVRGKTGRVYGDLMALLSVMKSLPLAYNKDMQEDKEAIFDAVDTVKMCLPVFTKMIETMKIKKENMLRAAQGGFTNATDMADYLVKKGIPFRNAHEIIGKMVLYCIENNKAIEELDMSEFKSFSELIEEDVYEEISLSKCVSGRNLPGGPAKESVMASIENGLKFLSTQ</sequence>
<protein>
    <recommendedName>
        <fullName evidence="1">Argininosuccinate lyase</fullName>
        <shortName evidence="1">ASAL</shortName>
        <ecNumber evidence="1">4.3.2.1</ecNumber>
    </recommendedName>
    <alternativeName>
        <fullName evidence="1">Arginosuccinase</fullName>
    </alternativeName>
</protein>
<comment type="catalytic activity">
    <reaction evidence="1">
        <text>2-(N(omega)-L-arginino)succinate = fumarate + L-arginine</text>
        <dbReference type="Rhea" id="RHEA:24020"/>
        <dbReference type="ChEBI" id="CHEBI:29806"/>
        <dbReference type="ChEBI" id="CHEBI:32682"/>
        <dbReference type="ChEBI" id="CHEBI:57472"/>
        <dbReference type="EC" id="4.3.2.1"/>
    </reaction>
</comment>
<comment type="pathway">
    <text evidence="1">Amino-acid biosynthesis; L-arginine biosynthesis; L-arginine from L-ornithine and carbamoyl phosphate: step 3/3.</text>
</comment>
<comment type="subcellular location">
    <subcellularLocation>
        <location evidence="1">Cytoplasm</location>
    </subcellularLocation>
</comment>
<comment type="similarity">
    <text evidence="1">Belongs to the lyase 1 family. Argininosuccinate lyase subfamily.</text>
</comment>
<feature type="chain" id="PRO_1000000472" description="Argininosuccinate lyase">
    <location>
        <begin position="1"/>
        <end position="458"/>
    </location>
</feature>